<evidence type="ECO:0000250" key="1"/>
<evidence type="ECO:0000250" key="2">
    <source>
        <dbReference type="UniProtKB" id="E9Q3E1"/>
    </source>
</evidence>
<evidence type="ECO:0000269" key="3">
    <source>
    </source>
</evidence>
<evidence type="ECO:0000269" key="4">
    <source>
    </source>
</evidence>
<evidence type="ECO:0000269" key="5">
    <source>
    </source>
</evidence>
<evidence type="ECO:0000269" key="6">
    <source>
    </source>
</evidence>
<evidence type="ECO:0000269" key="7">
    <source>
    </source>
</evidence>
<evidence type="ECO:0000269" key="8">
    <source ref="3"/>
</evidence>
<evidence type="ECO:0000305" key="9"/>
<organism>
    <name type="scientific">Homo sapiens</name>
    <name type="common">Human</name>
    <dbReference type="NCBI Taxonomy" id="9606"/>
    <lineage>
        <taxon>Eukaryota</taxon>
        <taxon>Metazoa</taxon>
        <taxon>Chordata</taxon>
        <taxon>Craniata</taxon>
        <taxon>Vertebrata</taxon>
        <taxon>Euteleostomi</taxon>
        <taxon>Mammalia</taxon>
        <taxon>Eutheria</taxon>
        <taxon>Euarchontoglires</taxon>
        <taxon>Primates</taxon>
        <taxon>Haplorrhini</taxon>
        <taxon>Catarrhini</taxon>
        <taxon>Hominidae</taxon>
        <taxon>Homo</taxon>
    </lineage>
</organism>
<dbReference type="EC" id="1.2.1.3" evidence="2"/>
<dbReference type="EC" id="1.2.1.48" evidence="2"/>
<dbReference type="EMBL" id="U37519">
    <property type="protein sequence ID" value="AAA85441.1"/>
    <property type="molecule type" value="mRNA"/>
</dbReference>
<dbReference type="EMBL" id="BT006810">
    <property type="protein sequence ID" value="AAP35456.1"/>
    <property type="molecule type" value="mRNA"/>
</dbReference>
<dbReference type="EMBL" id="AK092464">
    <property type="protein sequence ID" value="BAC03897.1"/>
    <property type="molecule type" value="mRNA"/>
</dbReference>
<dbReference type="EMBL" id="AP003385">
    <property type="status" value="NOT_ANNOTATED_CDS"/>
    <property type="molecule type" value="mRNA"/>
</dbReference>
<dbReference type="EMBL" id="BC007685">
    <property type="protein sequence ID" value="AAH07685.1"/>
    <property type="molecule type" value="mRNA"/>
</dbReference>
<dbReference type="CCDS" id="CCDS31622.1"/>
<dbReference type="PIR" id="JC5019">
    <property type="entry name" value="JC5019"/>
</dbReference>
<dbReference type="RefSeq" id="NP_001026786.3">
    <property type="nucleotide sequence ID" value="NM_001031615.3"/>
</dbReference>
<dbReference type="RefSeq" id="NP_001341274.2">
    <property type="nucleotide sequence ID" value="NM_001354345.3"/>
</dbReference>
<dbReference type="RefSeq" id="NP_001380329.1">
    <property type="nucleotide sequence ID" value="NM_001393400.1"/>
</dbReference>
<dbReference type="RefSeq" id="NP_001380331.1">
    <property type="nucleotide sequence ID" value="NM_001393402.2"/>
</dbReference>
<dbReference type="RefSeq" id="XP_047282517.1">
    <property type="nucleotide sequence ID" value="XM_047426561.1"/>
</dbReference>
<dbReference type="RefSeq" id="XP_047282518.1">
    <property type="nucleotide sequence ID" value="XM_047426562.1"/>
</dbReference>
<dbReference type="RefSeq" id="XP_047282519.1">
    <property type="nucleotide sequence ID" value="XM_047426563.1"/>
</dbReference>
<dbReference type="SMR" id="P48448"/>
<dbReference type="BioGRID" id="106724">
    <property type="interactions" value="32"/>
</dbReference>
<dbReference type="FunCoup" id="P48448">
    <property type="interactions" value="57"/>
</dbReference>
<dbReference type="IntAct" id="P48448">
    <property type="interactions" value="20"/>
</dbReference>
<dbReference type="STRING" id="9606.ENSP00000501254"/>
<dbReference type="ChEMBL" id="CHEMBL3542434"/>
<dbReference type="DrugBank" id="DB09116">
    <property type="generic name" value="Calcium carbimide"/>
</dbReference>
<dbReference type="DrugBank" id="DB00157">
    <property type="generic name" value="NADH"/>
</dbReference>
<dbReference type="iPTMnet" id="P48448"/>
<dbReference type="PhosphoSitePlus" id="P48448"/>
<dbReference type="BioMuta" id="ALDH3B2"/>
<dbReference type="DMDM" id="288558849"/>
<dbReference type="jPOST" id="P48448"/>
<dbReference type="MassIVE" id="P48448"/>
<dbReference type="PaxDb" id="9606-ENSP00000255084"/>
<dbReference type="PeptideAtlas" id="P48448"/>
<dbReference type="ProteomicsDB" id="55892"/>
<dbReference type="Pumba" id="P48448"/>
<dbReference type="Antibodypedia" id="30491">
    <property type="antibodies" value="216 antibodies from 33 providers"/>
</dbReference>
<dbReference type="DNASU" id="222"/>
<dbReference type="Ensembl" id="ENST00000349015.7">
    <property type="protein sequence ID" value="ENSP00000255084.3"/>
    <property type="gene ID" value="ENSG00000132746.16"/>
</dbReference>
<dbReference type="Ensembl" id="ENST00000530069.6">
    <property type="protein sequence ID" value="ENSP00000431595.1"/>
    <property type="gene ID" value="ENSG00000132746.16"/>
</dbReference>
<dbReference type="Ensembl" id="ENST00000673966.2">
    <property type="protein sequence ID" value="ENSP00000501254.1"/>
    <property type="gene ID" value="ENSG00000132746.16"/>
</dbReference>
<dbReference type="GeneID" id="222"/>
<dbReference type="MANE-Select" id="ENST00000673966.2">
    <property type="protein sequence ID" value="ENSP00000501254.1"/>
    <property type="RefSeq nucleotide sequence ID" value="NM_001393402.2"/>
    <property type="RefSeq protein sequence ID" value="NP_001380331.1"/>
</dbReference>
<dbReference type="UCSC" id="uc001omr.4">
    <property type="organism name" value="human"/>
</dbReference>
<dbReference type="AGR" id="HGNC:411"/>
<dbReference type="GeneCards" id="ALDH3B2"/>
<dbReference type="HGNC" id="HGNC:411">
    <property type="gene designation" value="ALDH3B2"/>
</dbReference>
<dbReference type="HPA" id="ENSG00000132746">
    <property type="expression patterns" value="Group enriched (breast, esophagus, skin, vagina)"/>
</dbReference>
<dbReference type="MIM" id="601917">
    <property type="type" value="gene"/>
</dbReference>
<dbReference type="neXtProt" id="NX_P48448"/>
<dbReference type="OpenTargets" id="ENSG00000132746"/>
<dbReference type="PharmGKB" id="PA24700"/>
<dbReference type="VEuPathDB" id="HostDB:ENSG00000132746"/>
<dbReference type="eggNOG" id="KOG2456">
    <property type="taxonomic scope" value="Eukaryota"/>
</dbReference>
<dbReference type="GeneTree" id="ENSGT00940000155904"/>
<dbReference type="HOGENOM" id="CLU_005391_3_2_1"/>
<dbReference type="InParanoid" id="P48448"/>
<dbReference type="OMA" id="AVANCIV"/>
<dbReference type="OrthoDB" id="440325at2759"/>
<dbReference type="PAN-GO" id="P48448">
    <property type="GO annotations" value="3 GO annotations based on evolutionary models"/>
</dbReference>
<dbReference type="PhylomeDB" id="P48448"/>
<dbReference type="TreeFam" id="TF314264"/>
<dbReference type="PathwayCommons" id="P48448"/>
<dbReference type="Reactome" id="R-HSA-9845614">
    <property type="pathway name" value="Sphingolipid catabolism"/>
</dbReference>
<dbReference type="SignaLink" id="P48448"/>
<dbReference type="UniPathway" id="UPA00780">
    <property type="reaction ID" value="UER00768"/>
</dbReference>
<dbReference type="BioGRID-ORCS" id="222">
    <property type="hits" value="17 hits in 1156 CRISPR screens"/>
</dbReference>
<dbReference type="ChiTaRS" id="ALDH3B2">
    <property type="organism name" value="human"/>
</dbReference>
<dbReference type="GeneWiki" id="ALDH3B2"/>
<dbReference type="GenomeRNAi" id="222"/>
<dbReference type="Pharos" id="P48448">
    <property type="development level" value="Tbio"/>
</dbReference>
<dbReference type="PRO" id="PR:P48448"/>
<dbReference type="Proteomes" id="UP000005640">
    <property type="component" value="Chromosome 11"/>
</dbReference>
<dbReference type="RNAct" id="P48448">
    <property type="molecule type" value="protein"/>
</dbReference>
<dbReference type="Bgee" id="ENSG00000132746">
    <property type="expression patterns" value="Expressed in lower esophagus mucosa and 113 other cell types or tissues"/>
</dbReference>
<dbReference type="ExpressionAtlas" id="P48448">
    <property type="expression patterns" value="baseline and differential"/>
</dbReference>
<dbReference type="GO" id="GO:0005737">
    <property type="term" value="C:cytoplasm"/>
    <property type="evidence" value="ECO:0000318"/>
    <property type="project" value="GO_Central"/>
</dbReference>
<dbReference type="GO" id="GO:0005811">
    <property type="term" value="C:lipid droplet"/>
    <property type="evidence" value="ECO:0000304"/>
    <property type="project" value="Reactome"/>
</dbReference>
<dbReference type="GO" id="GO:0016020">
    <property type="term" value="C:membrane"/>
    <property type="evidence" value="ECO:0007669"/>
    <property type="project" value="GOC"/>
</dbReference>
<dbReference type="GO" id="GO:0004028">
    <property type="term" value="F:3-chloroallyl aldehyde dehydrogenase activity"/>
    <property type="evidence" value="ECO:0000318"/>
    <property type="project" value="GO_Central"/>
</dbReference>
<dbReference type="GO" id="GO:0004029">
    <property type="term" value="F:aldehyde dehydrogenase (NAD+) activity"/>
    <property type="evidence" value="ECO:0000318"/>
    <property type="project" value="GO_Central"/>
</dbReference>
<dbReference type="GO" id="GO:0004030">
    <property type="term" value="F:aldehyde dehydrogenase [NAD(P)+] activity"/>
    <property type="evidence" value="ECO:0000269"/>
    <property type="project" value="Reactome"/>
</dbReference>
<dbReference type="GO" id="GO:0050061">
    <property type="term" value="F:long-chain fatty aldehyde dehydrogenase (NAD+) activity"/>
    <property type="evidence" value="ECO:0007669"/>
    <property type="project" value="RHEA"/>
</dbReference>
<dbReference type="GO" id="GO:0052814">
    <property type="term" value="F:medium-chain fatty aldehyde dehydrogenase (NAD+) activity"/>
    <property type="evidence" value="ECO:0007669"/>
    <property type="project" value="RHEA"/>
</dbReference>
<dbReference type="GO" id="GO:0006066">
    <property type="term" value="P:alcohol metabolic process"/>
    <property type="evidence" value="ECO:0000304"/>
    <property type="project" value="ProtInc"/>
</dbReference>
<dbReference type="GO" id="GO:0006081">
    <property type="term" value="P:aldehyde metabolic process"/>
    <property type="evidence" value="ECO:0000318"/>
    <property type="project" value="GO_Central"/>
</dbReference>
<dbReference type="GO" id="GO:0006068">
    <property type="term" value="P:ethanol catabolic process"/>
    <property type="evidence" value="ECO:0007669"/>
    <property type="project" value="UniProtKB-UniPathway"/>
</dbReference>
<dbReference type="GO" id="GO:0006629">
    <property type="term" value="P:lipid metabolic process"/>
    <property type="evidence" value="ECO:0000304"/>
    <property type="project" value="ProtInc"/>
</dbReference>
<dbReference type="GO" id="GO:0030149">
    <property type="term" value="P:sphingolipid catabolic process"/>
    <property type="evidence" value="ECO:0000304"/>
    <property type="project" value="Reactome"/>
</dbReference>
<dbReference type="FunFam" id="3.40.309.10:FF:000003">
    <property type="entry name" value="Aldehyde dehydrogenase"/>
    <property type="match status" value="1"/>
</dbReference>
<dbReference type="Gene3D" id="3.40.605.10">
    <property type="entry name" value="Aldehyde Dehydrogenase, Chain A, domain 1"/>
    <property type="match status" value="1"/>
</dbReference>
<dbReference type="Gene3D" id="3.40.309.10">
    <property type="entry name" value="Aldehyde Dehydrogenase, Chain A, domain 2"/>
    <property type="match status" value="1"/>
</dbReference>
<dbReference type="InterPro" id="IPR016161">
    <property type="entry name" value="Ald_DH/histidinol_DH"/>
</dbReference>
<dbReference type="InterPro" id="IPR016163">
    <property type="entry name" value="Ald_DH_C"/>
</dbReference>
<dbReference type="InterPro" id="IPR016160">
    <property type="entry name" value="Ald_DH_CS_CYS"/>
</dbReference>
<dbReference type="InterPro" id="IPR029510">
    <property type="entry name" value="Ald_DH_CS_GLU"/>
</dbReference>
<dbReference type="InterPro" id="IPR016162">
    <property type="entry name" value="Ald_DH_N"/>
</dbReference>
<dbReference type="InterPro" id="IPR015590">
    <property type="entry name" value="Aldehyde_DH_dom"/>
</dbReference>
<dbReference type="InterPro" id="IPR012394">
    <property type="entry name" value="Aldehyde_DH_NAD(P)"/>
</dbReference>
<dbReference type="PANTHER" id="PTHR43570">
    <property type="entry name" value="ALDEHYDE DEHYDROGENASE"/>
    <property type="match status" value="1"/>
</dbReference>
<dbReference type="PANTHER" id="PTHR43570:SF6">
    <property type="entry name" value="ALDEHYDE DEHYDROGENASE FAMILY 3 MEMBER B2"/>
    <property type="match status" value="1"/>
</dbReference>
<dbReference type="Pfam" id="PF00171">
    <property type="entry name" value="Aldedh"/>
    <property type="match status" value="1"/>
</dbReference>
<dbReference type="SUPFAM" id="SSF53720">
    <property type="entry name" value="ALDH-like"/>
    <property type="match status" value="1"/>
</dbReference>
<dbReference type="PROSITE" id="PS00070">
    <property type="entry name" value="ALDEHYDE_DEHYDR_CYS"/>
    <property type="match status" value="1"/>
</dbReference>
<dbReference type="PROSITE" id="PS00687">
    <property type="entry name" value="ALDEHYDE_DEHYDR_GLU"/>
    <property type="match status" value="1"/>
</dbReference>
<keyword id="KW-0551">Lipid droplet</keyword>
<keyword id="KW-0443">Lipid metabolism</keyword>
<keyword id="KW-0449">Lipoprotein</keyword>
<keyword id="KW-0488">Methylation</keyword>
<keyword id="KW-0520">NAD</keyword>
<keyword id="KW-0560">Oxidoreductase</keyword>
<keyword id="KW-0636">Prenylation</keyword>
<keyword id="KW-1185">Reference proteome</keyword>
<name>AL3B2_HUMAN</name>
<reference key="1">
    <citation type="journal article" date="1995" name="Adv. Exp. Med. Biol.">
        <title>Cloning and characterization of genes encoding four additional human aldehyde dehydrogenase isozymes.</title>
        <authorList>
            <person name="Hsu L.C."/>
            <person name="Chang W.-C."/>
            <person name="Lin S.W."/>
            <person name="Yoshida A."/>
        </authorList>
    </citation>
    <scope>NUCLEOTIDE SEQUENCE [MRNA]</scope>
    <scope>VARIANTS ASN-52; ARG-203; GLY-220 AND ARG-361</scope>
    <source>
        <tissue>Salivary gland</tissue>
    </source>
</reference>
<reference key="2">
    <citation type="journal article" date="1996" name="Gene">
        <title>Sequencing and expression of the human ALDH8 encoding a new member of the aldehyde dehydrogenase family.</title>
        <authorList>
            <person name="Hsu L.C."/>
            <person name="Chang W.-C."/>
        </authorList>
    </citation>
    <scope>NUCLEOTIDE SEQUENCE [MRNA]</scope>
    <scope>VARIANTS ASN-52; ARG-203; GLY-220 AND ARG-361</scope>
    <scope>TISSUE SPECIFICITY</scope>
    <source>
        <tissue>Salivary gland</tissue>
    </source>
</reference>
<reference key="3">
    <citation type="submission" date="2003-05" db="EMBL/GenBank/DDBJ databases">
        <title>Cloning of human full-length CDSs in BD Creator(TM) system donor vector.</title>
        <authorList>
            <person name="Kalnine N."/>
            <person name="Chen X."/>
            <person name="Rolfs A."/>
            <person name="Halleck A."/>
            <person name="Hines L."/>
            <person name="Eisenstein S."/>
            <person name="Koundinya M."/>
            <person name="Raphael J."/>
            <person name="Moreira D."/>
            <person name="Kelley T."/>
            <person name="LaBaer J."/>
            <person name="Lin Y."/>
            <person name="Phelan M."/>
            <person name="Farmer A."/>
        </authorList>
    </citation>
    <scope>NUCLEOTIDE SEQUENCE [LARGE SCALE MRNA]</scope>
    <scope>VARIANTS ARG-203; GLY-220 AND TRP-276</scope>
</reference>
<reference key="4">
    <citation type="journal article" date="2004" name="Nat. Genet.">
        <title>Complete sequencing and characterization of 21,243 full-length human cDNAs.</title>
        <authorList>
            <person name="Ota T."/>
            <person name="Suzuki Y."/>
            <person name="Nishikawa T."/>
            <person name="Otsuki T."/>
            <person name="Sugiyama T."/>
            <person name="Irie R."/>
            <person name="Wakamatsu A."/>
            <person name="Hayashi K."/>
            <person name="Sato H."/>
            <person name="Nagai K."/>
            <person name="Kimura K."/>
            <person name="Makita H."/>
            <person name="Sekine M."/>
            <person name="Obayashi M."/>
            <person name="Nishi T."/>
            <person name="Shibahara T."/>
            <person name="Tanaka T."/>
            <person name="Ishii S."/>
            <person name="Yamamoto J."/>
            <person name="Saito K."/>
            <person name="Kawai Y."/>
            <person name="Isono Y."/>
            <person name="Nakamura Y."/>
            <person name="Nagahari K."/>
            <person name="Murakami K."/>
            <person name="Yasuda T."/>
            <person name="Iwayanagi T."/>
            <person name="Wagatsuma M."/>
            <person name="Shiratori A."/>
            <person name="Sudo H."/>
            <person name="Hosoiri T."/>
            <person name="Kaku Y."/>
            <person name="Kodaira H."/>
            <person name="Kondo H."/>
            <person name="Sugawara M."/>
            <person name="Takahashi M."/>
            <person name="Kanda K."/>
            <person name="Yokoi T."/>
            <person name="Furuya T."/>
            <person name="Kikkawa E."/>
            <person name="Omura Y."/>
            <person name="Abe K."/>
            <person name="Kamihara K."/>
            <person name="Katsuta N."/>
            <person name="Sato K."/>
            <person name="Tanikawa M."/>
            <person name="Yamazaki M."/>
            <person name="Ninomiya K."/>
            <person name="Ishibashi T."/>
            <person name="Yamashita H."/>
            <person name="Murakawa K."/>
            <person name="Fujimori K."/>
            <person name="Tanai H."/>
            <person name="Kimata M."/>
            <person name="Watanabe M."/>
            <person name="Hiraoka S."/>
            <person name="Chiba Y."/>
            <person name="Ishida S."/>
            <person name="Ono Y."/>
            <person name="Takiguchi S."/>
            <person name="Watanabe S."/>
            <person name="Yosida M."/>
            <person name="Hotuta T."/>
            <person name="Kusano J."/>
            <person name="Kanehori K."/>
            <person name="Takahashi-Fujii A."/>
            <person name="Hara H."/>
            <person name="Tanase T.-O."/>
            <person name="Nomura Y."/>
            <person name="Togiya S."/>
            <person name="Komai F."/>
            <person name="Hara R."/>
            <person name="Takeuchi K."/>
            <person name="Arita M."/>
            <person name="Imose N."/>
            <person name="Musashino K."/>
            <person name="Yuuki H."/>
            <person name="Oshima A."/>
            <person name="Sasaki N."/>
            <person name="Aotsuka S."/>
            <person name="Yoshikawa Y."/>
            <person name="Matsunawa H."/>
            <person name="Ichihara T."/>
            <person name="Shiohata N."/>
            <person name="Sano S."/>
            <person name="Moriya S."/>
            <person name="Momiyama H."/>
            <person name="Satoh N."/>
            <person name="Takami S."/>
            <person name="Terashima Y."/>
            <person name="Suzuki O."/>
            <person name="Nakagawa S."/>
            <person name="Senoh A."/>
            <person name="Mizoguchi H."/>
            <person name="Goto Y."/>
            <person name="Shimizu F."/>
            <person name="Wakebe H."/>
            <person name="Hishigaki H."/>
            <person name="Watanabe T."/>
            <person name="Sugiyama A."/>
            <person name="Takemoto M."/>
            <person name="Kawakami B."/>
            <person name="Yamazaki M."/>
            <person name="Watanabe K."/>
            <person name="Kumagai A."/>
            <person name="Itakura S."/>
            <person name="Fukuzumi Y."/>
            <person name="Fujimori Y."/>
            <person name="Komiyama M."/>
            <person name="Tashiro H."/>
            <person name="Tanigami A."/>
            <person name="Fujiwara T."/>
            <person name="Ono T."/>
            <person name="Yamada K."/>
            <person name="Fujii Y."/>
            <person name="Ozaki K."/>
            <person name="Hirao M."/>
            <person name="Ohmori Y."/>
            <person name="Kawabata A."/>
            <person name="Hikiji T."/>
            <person name="Kobatake N."/>
            <person name="Inagaki H."/>
            <person name="Ikema Y."/>
            <person name="Okamoto S."/>
            <person name="Okitani R."/>
            <person name="Kawakami T."/>
            <person name="Noguchi S."/>
            <person name="Itoh T."/>
            <person name="Shigeta K."/>
            <person name="Senba T."/>
            <person name="Matsumura K."/>
            <person name="Nakajima Y."/>
            <person name="Mizuno T."/>
            <person name="Morinaga M."/>
            <person name="Sasaki M."/>
            <person name="Togashi T."/>
            <person name="Oyama M."/>
            <person name="Hata H."/>
            <person name="Watanabe M."/>
            <person name="Komatsu T."/>
            <person name="Mizushima-Sugano J."/>
            <person name="Satoh T."/>
            <person name="Shirai Y."/>
            <person name="Takahashi Y."/>
            <person name="Nakagawa K."/>
            <person name="Okumura K."/>
            <person name="Nagase T."/>
            <person name="Nomura N."/>
            <person name="Kikuchi H."/>
            <person name="Masuho Y."/>
            <person name="Yamashita R."/>
            <person name="Nakai K."/>
            <person name="Yada T."/>
            <person name="Nakamura Y."/>
            <person name="Ohara O."/>
            <person name="Isogai T."/>
            <person name="Sugano S."/>
        </authorList>
    </citation>
    <scope>NUCLEOTIDE SEQUENCE [LARGE SCALE MRNA]</scope>
    <scope>VARIANTS ASN-52; ARG-203; GLY-220 AND ARG-361</scope>
    <source>
        <tissue>Placenta</tissue>
    </source>
</reference>
<reference key="5">
    <citation type="journal article" date="2006" name="Nature">
        <title>Human chromosome 11 DNA sequence and analysis including novel gene identification.</title>
        <authorList>
            <person name="Taylor T.D."/>
            <person name="Noguchi H."/>
            <person name="Totoki Y."/>
            <person name="Toyoda A."/>
            <person name="Kuroki Y."/>
            <person name="Dewar K."/>
            <person name="Lloyd C."/>
            <person name="Itoh T."/>
            <person name="Takeda T."/>
            <person name="Kim D.-W."/>
            <person name="She X."/>
            <person name="Barlow K.F."/>
            <person name="Bloom T."/>
            <person name="Bruford E."/>
            <person name="Chang J.L."/>
            <person name="Cuomo C.A."/>
            <person name="Eichler E."/>
            <person name="FitzGerald M.G."/>
            <person name="Jaffe D.B."/>
            <person name="LaButti K."/>
            <person name="Nicol R."/>
            <person name="Park H.-S."/>
            <person name="Seaman C."/>
            <person name="Sougnez C."/>
            <person name="Yang X."/>
            <person name="Zimmer A.R."/>
            <person name="Zody M.C."/>
            <person name="Birren B.W."/>
            <person name="Nusbaum C."/>
            <person name="Fujiyama A."/>
            <person name="Hattori M."/>
            <person name="Rogers J."/>
            <person name="Lander E.S."/>
            <person name="Sakaki Y."/>
        </authorList>
    </citation>
    <scope>NUCLEOTIDE SEQUENCE [LARGE SCALE GENOMIC DNA]</scope>
</reference>
<reference key="6">
    <citation type="journal article" date="2004" name="Genome Res.">
        <title>The status, quality, and expansion of the NIH full-length cDNA project: the Mammalian Gene Collection (MGC).</title>
        <authorList>
            <consortium name="The MGC Project Team"/>
        </authorList>
    </citation>
    <scope>NUCLEOTIDE SEQUENCE [LARGE SCALE MRNA]</scope>
    <scope>VARIANTS ARG-203; GLY-220 AND TRP-276</scope>
    <source>
        <tissue>Placenta</tissue>
    </source>
</reference>
<reference key="7">
    <citation type="journal article" date="2019" name="Int. J. Mol. Sci.">
        <title>Detection of ALDH3B2 in Human Placenta.</title>
        <authorList>
            <person name="Michorowska S."/>
            <person name="Giebultowicz J."/>
            <person name="Wolinowska R."/>
            <person name="Konopka A."/>
            <person name="Wilkaniec A."/>
            <person name="Krajewski P."/>
            <person name="Bulska E."/>
            <person name="Wroczynski P."/>
        </authorList>
    </citation>
    <scope>NUCLEOTIDE SEQUENCE [LARGE SCALE MRNA]</scope>
    <scope>TISSUE SPECIFICITY</scope>
</reference>
<sequence length="385" mass="42635">MKDEPRSTNLFMKLDSVFIWKEPFGLVLIIAPWNYPLNLTLVLLVGALAAGSCVVLKPSEISQGTEKVLAEVLPQYLDQSCFAVVLGGPQETGQLLEHKLDYIFFTGSPRVGKIVMTAATKHLTPVTLELGGKNPCYVDDNCDPQTVANRVAWFCYFNAGQTCVAPDYVLCSPEMQERLLPALQSTITRFYGDDPQSSPNLGHIINQKQFQRLRALLGCSRVAIGGQSNESDRYIAPTVLVDVQETEPVMQEEIFGPILPIVNVQSVDEAIKFINRQEKPLALYAFSNSSQVVNQMLERTSSGSFGGNEGFTYISLLSVPFGGVGHSGMGRYHGKFTFDTFSHHRTCLLAPSGLEKLKEIHYPPYTDWNQQLLRWGMGSQSCTLL</sequence>
<comment type="function">
    <text evidence="2">Oxidizes medium and long chain fatty aldehydes in lipid droplets into non-toxic fatty acids.</text>
</comment>
<comment type="catalytic activity">
    <reaction evidence="2">
        <text>an aldehyde + NAD(+) + H2O = a carboxylate + NADH + 2 H(+)</text>
        <dbReference type="Rhea" id="RHEA:16185"/>
        <dbReference type="ChEBI" id="CHEBI:15377"/>
        <dbReference type="ChEBI" id="CHEBI:15378"/>
        <dbReference type="ChEBI" id="CHEBI:17478"/>
        <dbReference type="ChEBI" id="CHEBI:29067"/>
        <dbReference type="ChEBI" id="CHEBI:57540"/>
        <dbReference type="ChEBI" id="CHEBI:57945"/>
        <dbReference type="EC" id="1.2.1.3"/>
    </reaction>
    <physiologicalReaction direction="left-to-right" evidence="2">
        <dbReference type="Rhea" id="RHEA:16186"/>
    </physiologicalReaction>
</comment>
<comment type="catalytic activity">
    <reaction evidence="2">
        <text>a long-chain fatty aldehyde + NAD(+) + H2O = a long-chain fatty acid + NADH + 2 H(+)</text>
        <dbReference type="Rhea" id="RHEA:10652"/>
        <dbReference type="ChEBI" id="CHEBI:15377"/>
        <dbReference type="ChEBI" id="CHEBI:15378"/>
        <dbReference type="ChEBI" id="CHEBI:17176"/>
        <dbReference type="ChEBI" id="CHEBI:57540"/>
        <dbReference type="ChEBI" id="CHEBI:57560"/>
        <dbReference type="ChEBI" id="CHEBI:57945"/>
        <dbReference type="EC" id="1.2.1.48"/>
    </reaction>
    <physiologicalReaction direction="left-to-right" evidence="2">
        <dbReference type="Rhea" id="RHEA:10653"/>
    </physiologicalReaction>
</comment>
<comment type="catalytic activity">
    <reaction evidence="2">
        <text>a medium-chain fatty aldehyde + NAD(+) + H2O = a medium-chain fatty acid + NADH + 2 H(+)</text>
        <dbReference type="Rhea" id="RHEA:69763"/>
        <dbReference type="ChEBI" id="CHEBI:15377"/>
        <dbReference type="ChEBI" id="CHEBI:15378"/>
        <dbReference type="ChEBI" id="CHEBI:57540"/>
        <dbReference type="ChEBI" id="CHEBI:57945"/>
        <dbReference type="ChEBI" id="CHEBI:59558"/>
        <dbReference type="ChEBI" id="CHEBI:142621"/>
    </reaction>
    <physiologicalReaction direction="left-to-right" evidence="2">
        <dbReference type="Rhea" id="RHEA:69764"/>
    </physiologicalReaction>
</comment>
<comment type="catalytic activity">
    <reaction evidence="2">
        <text>hexadecanoate + NADH + 2 H(+) = hexadecanal + NAD(+) + H2O</text>
        <dbReference type="Rhea" id="RHEA:33739"/>
        <dbReference type="ChEBI" id="CHEBI:7896"/>
        <dbReference type="ChEBI" id="CHEBI:15377"/>
        <dbReference type="ChEBI" id="CHEBI:15378"/>
        <dbReference type="ChEBI" id="CHEBI:17600"/>
        <dbReference type="ChEBI" id="CHEBI:57540"/>
        <dbReference type="ChEBI" id="CHEBI:57945"/>
    </reaction>
    <physiologicalReaction direction="left-to-right" evidence="2">
        <dbReference type="Rhea" id="RHEA:33740"/>
    </physiologicalReaction>
</comment>
<comment type="catalytic activity">
    <reaction evidence="2">
        <text>octanal + NAD(+) + H2O = octanoate + NADH + 2 H(+)</text>
        <dbReference type="Rhea" id="RHEA:44100"/>
        <dbReference type="ChEBI" id="CHEBI:15377"/>
        <dbReference type="ChEBI" id="CHEBI:15378"/>
        <dbReference type="ChEBI" id="CHEBI:17935"/>
        <dbReference type="ChEBI" id="CHEBI:25646"/>
        <dbReference type="ChEBI" id="CHEBI:57540"/>
        <dbReference type="ChEBI" id="CHEBI:57945"/>
    </reaction>
    <physiologicalReaction direction="left-to-right" evidence="2">
        <dbReference type="Rhea" id="RHEA:44101"/>
    </physiologicalReaction>
</comment>
<comment type="pathway">
    <text>Alcohol metabolism; ethanol degradation; acetate from ethanol: step 2/2.</text>
</comment>
<comment type="interaction">
    <interactant intactId="EBI-21868861">
        <id>P48448</id>
    </interactant>
    <interactant intactId="EBI-2558314">
        <id>P43353</id>
        <label>ALDH3B1</label>
    </interactant>
    <organismsDiffer>false</organismsDiffer>
    <experiments>3</experiments>
</comment>
<comment type="subcellular location">
    <subcellularLocation>
        <location evidence="2">Lipid droplet</location>
    </subcellularLocation>
</comment>
<comment type="tissue specificity">
    <text evidence="5 7">Salivary gland (PubMed:8890755). Expressed at protein level in placenta (PubMed:31847104).</text>
</comment>
<comment type="PTM">
    <text evidence="2">Geranylgeranylation is important for localization to lipid droplets and enzyme activity.</text>
</comment>
<comment type="similarity">
    <text evidence="9">Belongs to the aldehyde dehydrogenase family.</text>
</comment>
<feature type="chain" id="PRO_0000056484" description="Aldehyde dehydrogenase family 3 member B2">
    <location>
        <begin position="1"/>
        <end position="382"/>
    </location>
</feature>
<feature type="propeptide" id="PRO_0000436532" description="Removed in mature form" evidence="2">
    <location>
        <begin position="383"/>
        <end position="385"/>
    </location>
</feature>
<feature type="active site" evidence="1">
    <location>
        <position position="129"/>
    </location>
</feature>
<feature type="active site" evidence="1">
    <location>
        <position position="163"/>
    </location>
</feature>
<feature type="binding site" evidence="1">
    <location>
        <begin position="107"/>
        <end position="112"/>
    </location>
    <ligand>
        <name>NAD(+)</name>
        <dbReference type="ChEBI" id="CHEBI:57540"/>
    </ligand>
</feature>
<feature type="modified residue" description="Cysteine methyl ester" evidence="2">
    <location>
        <position position="382"/>
    </location>
</feature>
<feature type="lipid moiety-binding region" description="S-geranylgeranyl cysteine" evidence="2">
    <location>
        <position position="382"/>
    </location>
</feature>
<feature type="sequence variant" id="VAR_022058" description="In dbSNP:rs3741178.">
    <original>A</original>
    <variation>T</variation>
    <location>
        <position position="50"/>
    </location>
</feature>
<feature type="sequence variant" id="VAR_058696" description="In dbSNP:rs1551888." evidence="3 6 7">
    <original>S</original>
    <variation>N</variation>
    <location>
        <position position="52"/>
    </location>
</feature>
<feature type="sequence variant" id="VAR_058697" description="In dbSNP:rs6591270." evidence="3 4 6 7 8">
    <original>H</original>
    <variation>R</variation>
    <location>
        <position position="203"/>
    </location>
</feature>
<feature type="sequence variant" id="VAR_058698" description="In dbSNP:rs2447571." evidence="3 4 6 7 8">
    <original>S</original>
    <variation>G</variation>
    <location>
        <position position="220"/>
    </location>
</feature>
<feature type="sequence variant" id="VAR_058699" description="In dbSNP:rs17856219." evidence="4 8">
    <original>R</original>
    <variation>W</variation>
    <location>
        <position position="276"/>
    </location>
</feature>
<feature type="sequence variant" id="VAR_055699" description="In dbSNP:rs4646826.">
    <original>S</original>
    <variation>R</variation>
    <location>
        <position position="302"/>
    </location>
</feature>
<feature type="sequence variant" id="VAR_058700" description="In dbSNP:rs1551886." evidence="3 6 7">
    <original>H</original>
    <variation>R</variation>
    <location>
        <position position="361"/>
    </location>
</feature>
<feature type="sequence conflict" description="In Ref. 4; BAC03897." evidence="9" ref="4">
    <original>K</original>
    <variation>E</variation>
    <location>
        <position position="2"/>
    </location>
</feature>
<feature type="sequence conflict" description="In Ref. 1; AAA85441 and 2; no nucleotide entry." evidence="9" ref="1 2">
    <original>ALA</original>
    <variation>TLP</variation>
    <location>
        <begin position="47"/>
        <end position="49"/>
    </location>
</feature>
<feature type="sequence conflict" description="In Ref. 4; BAC03897." evidence="9" ref="4">
    <original>G</original>
    <variation>V</variation>
    <location>
        <position position="132"/>
    </location>
</feature>
<feature type="sequence conflict" description="In Ref. 1; AAA85441 and 2; no nucleotide entry." evidence="9" ref="1 2">
    <original>S</original>
    <variation>R</variation>
    <location>
        <position position="290"/>
    </location>
</feature>
<accession>P48448</accession>
<accession>Q53Y98</accession>
<accession>Q8NAL5</accession>
<accession>Q96IB2</accession>
<gene>
    <name type="primary">ALDH3B2</name>
    <name type="synonym">ALDH8</name>
</gene>
<proteinExistence type="evidence at protein level"/>
<protein>
    <recommendedName>
        <fullName>Aldehyde dehydrogenase family 3 member B2</fullName>
        <shortName>ALDH3B2</shortName>
        <ecNumber evidence="2">1.2.1.3</ecNumber>
    </recommendedName>
    <alternativeName>
        <fullName>Aldehyde dehydrogenase 8</fullName>
    </alternativeName>
    <alternativeName>
        <fullName>Long-chain fatty aldehyde dehydrogenase</fullName>
        <ecNumber evidence="2">1.2.1.48</ecNumber>
    </alternativeName>
</protein>